<gene>
    <name evidence="6" type="primary">PP2C53</name>
    <name evidence="7" type="synonym">ABIL2</name>
    <name evidence="10" type="ordered locus">Os05g0592800</name>
    <name evidence="8" type="ordered locus">LOC_Os05g51510</name>
    <name type="ORF">OsJ_018965</name>
    <name evidence="11" type="ORF">OsJ_19760</name>
    <name evidence="9" type="ORF">P0663C08.11</name>
</gene>
<accession>Q6L4R7</accession>
<accession>B7EHS4</accession>
<accession>B9FJ05</accession>
<feature type="chain" id="PRO_0000363300" description="Protein phosphatase 2C 53">
    <location>
        <begin position="1"/>
        <end position="445"/>
    </location>
</feature>
<feature type="domain" description="PPM-type phosphatase" evidence="2">
    <location>
        <begin position="124"/>
        <end position="435"/>
    </location>
</feature>
<feature type="binding site" evidence="1">
    <location>
        <position position="180"/>
    </location>
    <ligand>
        <name>Mn(2+)</name>
        <dbReference type="ChEBI" id="CHEBI:29035"/>
        <label>1</label>
    </ligand>
</feature>
<feature type="binding site" evidence="1">
    <location>
        <position position="180"/>
    </location>
    <ligand>
        <name>Mn(2+)</name>
        <dbReference type="ChEBI" id="CHEBI:29035"/>
        <label>2</label>
    </ligand>
</feature>
<feature type="binding site" evidence="1">
    <location>
        <position position="181"/>
    </location>
    <ligand>
        <name>Mn(2+)</name>
        <dbReference type="ChEBI" id="CHEBI:29035"/>
        <label>1</label>
    </ligand>
</feature>
<feature type="binding site" evidence="1">
    <location>
        <position position="362"/>
    </location>
    <ligand>
        <name>Mn(2+)</name>
        <dbReference type="ChEBI" id="CHEBI:29035"/>
        <label>2</label>
    </ligand>
</feature>
<feature type="binding site" evidence="1">
    <location>
        <position position="426"/>
    </location>
    <ligand>
        <name>Mn(2+)</name>
        <dbReference type="ChEBI" id="CHEBI:29035"/>
        <label>2</label>
    </ligand>
</feature>
<feature type="splice variant" id="VSP_036273" description="In isoform 2." evidence="5">
    <location>
        <begin position="1"/>
        <end position="144"/>
    </location>
</feature>
<feature type="splice variant" id="VSP_036274" description="In isoform 2." evidence="5">
    <original>PRFFDLPLWMVAGDAAVDGLDRASFRLPAHFFAVYDGHGGVQ</original>
    <variation>MPWSRDFSTFLCGWLPATRQSTASTGPPSAFQPISSPSTMAT</variation>
    <location>
        <begin position="145"/>
        <end position="186"/>
    </location>
</feature>
<reference key="1">
    <citation type="journal article" date="2005" name="Mol. Genet. Genomics">
        <title>A fine physical map of the rice chromosome 5.</title>
        <authorList>
            <person name="Cheng C.-H."/>
            <person name="Chung M.C."/>
            <person name="Liu S.-M."/>
            <person name="Chen S.-K."/>
            <person name="Kao F.Y."/>
            <person name="Lin S.-J."/>
            <person name="Hsiao S.-H."/>
            <person name="Tseng I.C."/>
            <person name="Hsing Y.-I.C."/>
            <person name="Wu H.-P."/>
            <person name="Chen C.-S."/>
            <person name="Shaw J.-F."/>
            <person name="Wu J."/>
            <person name="Matsumoto T."/>
            <person name="Sasaki T."/>
            <person name="Chen H.-C."/>
            <person name="Chow T.-Y."/>
        </authorList>
    </citation>
    <scope>NUCLEOTIDE SEQUENCE [LARGE SCALE GENOMIC DNA]</scope>
    <source>
        <strain>cv. Nipponbare</strain>
    </source>
</reference>
<reference key="2">
    <citation type="journal article" date="2005" name="Nature">
        <title>The map-based sequence of the rice genome.</title>
        <authorList>
            <consortium name="International rice genome sequencing project (IRGSP)"/>
        </authorList>
    </citation>
    <scope>NUCLEOTIDE SEQUENCE [LARGE SCALE GENOMIC DNA]</scope>
    <source>
        <strain>cv. Nipponbare</strain>
    </source>
</reference>
<reference key="3">
    <citation type="journal article" date="2008" name="Nucleic Acids Res.">
        <title>The rice annotation project database (RAP-DB): 2008 update.</title>
        <authorList>
            <consortium name="The rice annotation project (RAP)"/>
        </authorList>
    </citation>
    <scope>GENOME REANNOTATION</scope>
    <source>
        <strain>cv. Nipponbare</strain>
    </source>
</reference>
<reference key="4">
    <citation type="journal article" date="2013" name="Rice">
        <title>Improvement of the Oryza sativa Nipponbare reference genome using next generation sequence and optical map data.</title>
        <authorList>
            <person name="Kawahara Y."/>
            <person name="de la Bastide M."/>
            <person name="Hamilton J.P."/>
            <person name="Kanamori H."/>
            <person name="McCombie W.R."/>
            <person name="Ouyang S."/>
            <person name="Schwartz D.C."/>
            <person name="Tanaka T."/>
            <person name="Wu J."/>
            <person name="Zhou S."/>
            <person name="Childs K.L."/>
            <person name="Davidson R.M."/>
            <person name="Lin H."/>
            <person name="Quesada-Ocampo L."/>
            <person name="Vaillancourt B."/>
            <person name="Sakai H."/>
            <person name="Lee S.S."/>
            <person name="Kim J."/>
            <person name="Numa H."/>
            <person name="Itoh T."/>
            <person name="Buell C.R."/>
            <person name="Matsumoto T."/>
        </authorList>
    </citation>
    <scope>GENOME REANNOTATION</scope>
    <source>
        <strain>cv. Nipponbare</strain>
    </source>
</reference>
<reference key="5">
    <citation type="journal article" date="2005" name="PLoS Biol.">
        <title>The genomes of Oryza sativa: a history of duplications.</title>
        <authorList>
            <person name="Yu J."/>
            <person name="Wang J."/>
            <person name="Lin W."/>
            <person name="Li S."/>
            <person name="Li H."/>
            <person name="Zhou J."/>
            <person name="Ni P."/>
            <person name="Dong W."/>
            <person name="Hu S."/>
            <person name="Zeng C."/>
            <person name="Zhang J."/>
            <person name="Zhang Y."/>
            <person name="Li R."/>
            <person name="Xu Z."/>
            <person name="Li S."/>
            <person name="Li X."/>
            <person name="Zheng H."/>
            <person name="Cong L."/>
            <person name="Lin L."/>
            <person name="Yin J."/>
            <person name="Geng J."/>
            <person name="Li G."/>
            <person name="Shi J."/>
            <person name="Liu J."/>
            <person name="Lv H."/>
            <person name="Li J."/>
            <person name="Wang J."/>
            <person name="Deng Y."/>
            <person name="Ran L."/>
            <person name="Shi X."/>
            <person name="Wang X."/>
            <person name="Wu Q."/>
            <person name="Li C."/>
            <person name="Ren X."/>
            <person name="Wang J."/>
            <person name="Wang X."/>
            <person name="Li D."/>
            <person name="Liu D."/>
            <person name="Zhang X."/>
            <person name="Ji Z."/>
            <person name="Zhao W."/>
            <person name="Sun Y."/>
            <person name="Zhang Z."/>
            <person name="Bao J."/>
            <person name="Han Y."/>
            <person name="Dong L."/>
            <person name="Ji J."/>
            <person name="Chen P."/>
            <person name="Wu S."/>
            <person name="Liu J."/>
            <person name="Xiao Y."/>
            <person name="Bu D."/>
            <person name="Tan J."/>
            <person name="Yang L."/>
            <person name="Ye C."/>
            <person name="Zhang J."/>
            <person name="Xu J."/>
            <person name="Zhou Y."/>
            <person name="Yu Y."/>
            <person name="Zhang B."/>
            <person name="Zhuang S."/>
            <person name="Wei H."/>
            <person name="Liu B."/>
            <person name="Lei M."/>
            <person name="Yu H."/>
            <person name="Li Y."/>
            <person name="Xu H."/>
            <person name="Wei S."/>
            <person name="He X."/>
            <person name="Fang L."/>
            <person name="Zhang Z."/>
            <person name="Zhang Y."/>
            <person name="Huang X."/>
            <person name="Su Z."/>
            <person name="Tong W."/>
            <person name="Li J."/>
            <person name="Tong Z."/>
            <person name="Li S."/>
            <person name="Ye J."/>
            <person name="Wang L."/>
            <person name="Fang L."/>
            <person name="Lei T."/>
            <person name="Chen C.-S."/>
            <person name="Chen H.-C."/>
            <person name="Xu Z."/>
            <person name="Li H."/>
            <person name="Huang H."/>
            <person name="Zhang F."/>
            <person name="Xu H."/>
            <person name="Li N."/>
            <person name="Zhao C."/>
            <person name="Li S."/>
            <person name="Dong L."/>
            <person name="Huang Y."/>
            <person name="Li L."/>
            <person name="Xi Y."/>
            <person name="Qi Q."/>
            <person name="Li W."/>
            <person name="Zhang B."/>
            <person name="Hu W."/>
            <person name="Zhang Y."/>
            <person name="Tian X."/>
            <person name="Jiao Y."/>
            <person name="Liang X."/>
            <person name="Jin J."/>
            <person name="Gao L."/>
            <person name="Zheng W."/>
            <person name="Hao B."/>
            <person name="Liu S.-M."/>
            <person name="Wang W."/>
            <person name="Yuan L."/>
            <person name="Cao M."/>
            <person name="McDermott J."/>
            <person name="Samudrala R."/>
            <person name="Wang J."/>
            <person name="Wong G.K.-S."/>
            <person name="Yang H."/>
        </authorList>
    </citation>
    <scope>NUCLEOTIDE SEQUENCE [LARGE SCALE GENOMIC DNA]</scope>
    <source>
        <strain>cv. Nipponbare</strain>
    </source>
</reference>
<reference key="6">
    <citation type="journal article" date="2003" name="Science">
        <title>Collection, mapping, and annotation of over 28,000 cDNA clones from japonica rice.</title>
        <authorList>
            <consortium name="The rice full-length cDNA consortium"/>
        </authorList>
    </citation>
    <scope>NUCLEOTIDE SEQUENCE [LARGE SCALE MRNA] (ISOFORMS 1 AND 2)</scope>
    <source>
        <strain>cv. Nipponbare</strain>
    </source>
</reference>
<reference key="7">
    <citation type="journal article" date="2008" name="BMC Genomics">
        <title>Genome-wide and expression analysis of protein phosphatase 2C in rice and Arabidopsis.</title>
        <authorList>
            <person name="Xue T."/>
            <person name="Wang D."/>
            <person name="Zhang S."/>
            <person name="Ehlting J."/>
            <person name="Ni F."/>
            <person name="Jacab S."/>
            <person name="Zheng C."/>
            <person name="Zhong Y."/>
        </authorList>
    </citation>
    <scope>GENE FAMILY</scope>
    <scope>NOMENCLATURE</scope>
</reference>
<reference key="8">
    <citation type="journal article" date="2015" name="Plant Cell Physiol.">
        <title>ABA regulates subcellular redistribution of OsABI-LIKE2, a negative regulator in ABA signaling, to control root architecture and drought resistance in Oryza sativa.</title>
        <authorList>
            <person name="Li C."/>
            <person name="Shen H."/>
            <person name="Wang T."/>
            <person name="Wang X."/>
        </authorList>
    </citation>
    <scope>FUNCTION</scope>
    <scope>CATALYTIC ACTIVITY</scope>
    <scope>ACTIVITY REGULATION</scope>
    <scope>INTERACTION WITH PYL10; SAPK8 AND SAPK10</scope>
    <scope>SUBCELLULAR LOCATION</scope>
    <scope>TISSUE SPECIFICITY</scope>
    <scope>LACK OF INDUCTION BY ABSCISIC ACID</scope>
</reference>
<reference key="9">
    <citation type="journal article" date="2015" name="Rice">
        <title>Characterization and functional analysis of pyrabactin resistance-like abscisic acid receptor family in rice.</title>
        <authorList>
            <person name="Tian X."/>
            <person name="Wang Z."/>
            <person name="Li X."/>
            <person name="Lv T."/>
            <person name="Liu H."/>
            <person name="Wang L."/>
            <person name="Niu H."/>
            <person name="Bu Q."/>
        </authorList>
    </citation>
    <scope>INTERACTION WITH PYL3; PYL5; PYL9 AND PYL10</scope>
    <scope>SUBCELLULAR LOCATION</scope>
</reference>
<evidence type="ECO:0000250" key="1"/>
<evidence type="ECO:0000255" key="2">
    <source>
        <dbReference type="PROSITE-ProRule" id="PRU01082"/>
    </source>
</evidence>
<evidence type="ECO:0000269" key="3">
    <source>
    </source>
</evidence>
<evidence type="ECO:0000269" key="4">
    <source>
    </source>
</evidence>
<evidence type="ECO:0000303" key="5">
    <source>
    </source>
</evidence>
<evidence type="ECO:0000303" key="6">
    <source>
    </source>
</evidence>
<evidence type="ECO:0000303" key="7">
    <source>
    </source>
</evidence>
<evidence type="ECO:0000305" key="8"/>
<evidence type="ECO:0000312" key="9">
    <source>
        <dbReference type="EMBL" id="AAT44303.1"/>
    </source>
</evidence>
<evidence type="ECO:0000312" key="10">
    <source>
        <dbReference type="EMBL" id="BAS95645.1"/>
    </source>
</evidence>
<evidence type="ECO:0000312" key="11">
    <source>
        <dbReference type="EMBL" id="EEE64901.1"/>
    </source>
</evidence>
<proteinExistence type="evidence at protein level"/>
<sequence length="445" mass="46684">MEDLALPAAPPAPTLSFTLLAAAAAVAEAMEEALGAALPPLTAPVPAPGDDSACGSPCSVASDCSSVASADFEGFAELGTSLLAGPAVLFDDLTAASVAVAEAAEPRAVGATARSVFAMDCVPLWGLESICGRRPEMEDDYAVVPRFFDLPLWMVAGDAAVDGLDRASFRLPAHFFAVYDGHGGVQVANYCRKRIHAVLTEELRRAEDDACGSDLSGLESKKLWEKAFVDCFSRVDAEVGGNAASGAPPVAPDTVGSTAVVAVVCSSHVIVANCGDSRAVLCRGKQPLPLSLDHKPNREDEYARIEALGGKVIQWNGYRVLGVLAMSRSIGDKYLKPYIIPVPEVTVVARAKDDDCLILASDGLWDVMSNEEVCDAARKRILLWHKKNAATASTSSAQISGDSSDPAAQAAADYLSKLALQKGSKDNITVVVIDLKAHRKFKSKA</sequence>
<organism>
    <name type="scientific">Oryza sativa subsp. japonica</name>
    <name type="common">Rice</name>
    <dbReference type="NCBI Taxonomy" id="39947"/>
    <lineage>
        <taxon>Eukaryota</taxon>
        <taxon>Viridiplantae</taxon>
        <taxon>Streptophyta</taxon>
        <taxon>Embryophyta</taxon>
        <taxon>Tracheophyta</taxon>
        <taxon>Spermatophyta</taxon>
        <taxon>Magnoliopsida</taxon>
        <taxon>Liliopsida</taxon>
        <taxon>Poales</taxon>
        <taxon>Poaceae</taxon>
        <taxon>BOP clade</taxon>
        <taxon>Oryzoideae</taxon>
        <taxon>Oryzeae</taxon>
        <taxon>Oryzinae</taxon>
        <taxon>Oryza</taxon>
        <taxon>Oryza sativa</taxon>
    </lineage>
</organism>
<comment type="function">
    <text evidence="4">Protein phosphatase that acts as a negative regulator of abscisic acid (ABA) signaling. Involved in the regulation of root architecture development and drought resistance. Can dephosphorylate SAPK8 and SAPK10 in vitro. Together with PYL10, SAPK8 and SAPK10, may form an ABA signaling module involved in stress response.</text>
</comment>
<comment type="catalytic activity">
    <reaction evidence="4">
        <text>O-phospho-L-seryl-[protein] + H2O = L-seryl-[protein] + phosphate</text>
        <dbReference type="Rhea" id="RHEA:20629"/>
        <dbReference type="Rhea" id="RHEA-COMP:9863"/>
        <dbReference type="Rhea" id="RHEA-COMP:11604"/>
        <dbReference type="ChEBI" id="CHEBI:15377"/>
        <dbReference type="ChEBI" id="CHEBI:29999"/>
        <dbReference type="ChEBI" id="CHEBI:43474"/>
        <dbReference type="ChEBI" id="CHEBI:83421"/>
        <dbReference type="EC" id="3.1.3.16"/>
    </reaction>
</comment>
<comment type="catalytic activity">
    <reaction evidence="4">
        <text>O-phospho-L-threonyl-[protein] + H2O = L-threonyl-[protein] + phosphate</text>
        <dbReference type="Rhea" id="RHEA:47004"/>
        <dbReference type="Rhea" id="RHEA-COMP:11060"/>
        <dbReference type="Rhea" id="RHEA-COMP:11605"/>
        <dbReference type="ChEBI" id="CHEBI:15377"/>
        <dbReference type="ChEBI" id="CHEBI:30013"/>
        <dbReference type="ChEBI" id="CHEBI:43474"/>
        <dbReference type="ChEBI" id="CHEBI:61977"/>
        <dbReference type="EC" id="3.1.3.16"/>
    </reaction>
</comment>
<comment type="cofactor">
    <cofactor evidence="1">
        <name>Mg(2+)</name>
        <dbReference type="ChEBI" id="CHEBI:18420"/>
    </cofactor>
    <cofactor evidence="1">
        <name>Mn(2+)</name>
        <dbReference type="ChEBI" id="CHEBI:29035"/>
    </cofactor>
    <text evidence="1">Binds 2 magnesium or manganese ions per subunit.</text>
</comment>
<comment type="activity regulation">
    <text evidence="4">Repressed by abscisic acid-bound PYL1.</text>
</comment>
<comment type="subunit">
    <text evidence="3 4">Interacts with PYL10, SAPK8 and SAPK10. Binding to PYL10 is dependent on the presence of abscisic acid (ABA) (PubMed:26491145). Interacts with PYL3, PYL5, PYL9 and PYL10. Binding to PYL9 and PYL10 is dependent on the presence of ABA (PubMed:26362328).</text>
</comment>
<comment type="subcellular location">
    <subcellularLocation>
        <location evidence="3 4">Cytoplasm</location>
        <location evidence="3 4">Cytosol</location>
    </subcellularLocation>
    <subcellularLocation>
        <location evidence="3 4">Nucleus</location>
    </subcellularLocation>
    <text evidence="4">Treatment with abscisic acid (ABA) reduces the nuclear localization and enhances the cytosolic localization.</text>
</comment>
<comment type="alternative products">
    <event type="alternative splicing"/>
    <isoform>
        <id>Q6L4R7-1</id>
        <name>1</name>
        <sequence type="displayed"/>
    </isoform>
    <isoform>
        <id>Q6L4R7-2</id>
        <name>2</name>
        <sequence type="described" ref="VSP_036273 VSP_036274"/>
    </isoform>
</comment>
<comment type="tissue specificity">
    <text evidence="4">Expressed in leaf blades, leaf sheaths and lamina joints. Expressed at low levels in roots, stems, flowers and panicles.</text>
</comment>
<comment type="induction">
    <text evidence="4">Not induced by abscisic acid (ABA).</text>
</comment>
<comment type="miscellaneous">
    <text evidence="4">Plants overexpressing PP2C53 are insensitive to abscisic acid (ABA), exhibit altered stomatal density and root architecture, and are hypersensitive to drought stress.</text>
</comment>
<comment type="similarity">
    <text evidence="8">Belongs to the PP2C family.</text>
</comment>
<protein>
    <recommendedName>
        <fullName evidence="8">Protein phosphatase 2C 53</fullName>
        <shortName evidence="6">OsPP2C53</shortName>
        <ecNumber evidence="4">3.1.3.16</ecNumber>
    </recommendedName>
    <alternativeName>
        <fullName evidence="8">ABI1-like protein 2</fullName>
        <shortName evidence="7">OsABI-LIKE2</shortName>
        <shortName evidence="7">OsABIL2</shortName>
    </alternativeName>
</protein>
<name>P2C53_ORYSJ</name>
<keyword id="KW-0938">Abscisic acid signaling pathway</keyword>
<keyword id="KW-0025">Alternative splicing</keyword>
<keyword id="KW-0963">Cytoplasm</keyword>
<keyword id="KW-0378">Hydrolase</keyword>
<keyword id="KW-0460">Magnesium</keyword>
<keyword id="KW-0464">Manganese</keyword>
<keyword id="KW-0479">Metal-binding</keyword>
<keyword id="KW-0539">Nucleus</keyword>
<keyword id="KW-0904">Protein phosphatase</keyword>
<keyword id="KW-1185">Reference proteome</keyword>
<dbReference type="EC" id="3.1.3.16" evidence="4"/>
<dbReference type="EMBL" id="AC130728">
    <property type="protein sequence ID" value="AAT44303.1"/>
    <property type="molecule type" value="Genomic_DNA"/>
</dbReference>
<dbReference type="EMBL" id="AP008211">
    <property type="protein sequence ID" value="BAF18412.1"/>
    <property type="molecule type" value="Genomic_DNA"/>
</dbReference>
<dbReference type="EMBL" id="AP014961">
    <property type="protein sequence ID" value="BAS95645.1"/>
    <property type="molecule type" value="Genomic_DNA"/>
</dbReference>
<dbReference type="EMBL" id="CM000142">
    <property type="protein sequence ID" value="EAZ35482.1"/>
    <property type="molecule type" value="Genomic_DNA"/>
</dbReference>
<dbReference type="EMBL" id="CM000142">
    <property type="protein sequence ID" value="EEE64901.1"/>
    <property type="molecule type" value="Genomic_DNA"/>
</dbReference>
<dbReference type="EMBL" id="AK067627">
    <property type="protein sequence ID" value="BAG90506.1"/>
    <property type="molecule type" value="mRNA"/>
</dbReference>
<dbReference type="EMBL" id="AK070388">
    <property type="protein sequence ID" value="BAG91921.1"/>
    <property type="molecule type" value="mRNA"/>
</dbReference>
<dbReference type="RefSeq" id="NP_001389584.1">
    <molecule id="Q6L4R7-1"/>
    <property type="nucleotide sequence ID" value="NM_001402655.1"/>
</dbReference>
<dbReference type="RefSeq" id="NP_001389585.1">
    <molecule id="Q6L4R7-2"/>
    <property type="nucleotide sequence ID" value="NM_001402656.1"/>
</dbReference>
<dbReference type="RefSeq" id="XP_015640522.1">
    <property type="nucleotide sequence ID" value="XM_015785036.1"/>
</dbReference>
<dbReference type="SMR" id="Q6L4R7"/>
<dbReference type="FunCoup" id="Q6L4R7">
    <property type="interactions" value="365"/>
</dbReference>
<dbReference type="STRING" id="39947.Q6L4R7"/>
<dbReference type="PaxDb" id="39947-Q6L4R7"/>
<dbReference type="EnsemblPlants" id="Os05t0592800-02">
    <molecule id="Q6L4R7-1"/>
    <property type="protein sequence ID" value="Os05t0592800-02"/>
    <property type="gene ID" value="Os05g0592800"/>
</dbReference>
<dbReference type="EnsemblPlants" id="Os05t0592800-03">
    <molecule id="Q6L4R7-1"/>
    <property type="protein sequence ID" value="Os05t0592800-03"/>
    <property type="gene ID" value="Os05g0592800"/>
</dbReference>
<dbReference type="GeneID" id="4339797"/>
<dbReference type="Gramene" id="Os05t0592800-02">
    <molecule id="Q6L4R7-1"/>
    <property type="protein sequence ID" value="Os05t0592800-02"/>
    <property type="gene ID" value="Os05g0592800"/>
</dbReference>
<dbReference type="Gramene" id="Os05t0592800-03">
    <molecule id="Q6L4R7-1"/>
    <property type="protein sequence ID" value="Os05t0592800-03"/>
    <property type="gene ID" value="Os05g0592800"/>
</dbReference>
<dbReference type="KEGG" id="dosa:Os05g0592800"/>
<dbReference type="eggNOG" id="KOG0698">
    <property type="taxonomic scope" value="Eukaryota"/>
</dbReference>
<dbReference type="HOGENOM" id="CLU_013173_20_4_1"/>
<dbReference type="InParanoid" id="Q6L4R7"/>
<dbReference type="OMA" id="FCRVDTE"/>
<dbReference type="OrthoDB" id="10264738at2759"/>
<dbReference type="PlantReactome" id="R-OSA-3899351">
    <property type="pathway name" value="Abscisic acid (ABA) mediated signaling"/>
</dbReference>
<dbReference type="PlantReactome" id="R-OSA-9639861">
    <property type="pathway name" value="Development of root hair"/>
</dbReference>
<dbReference type="Proteomes" id="UP000000763">
    <property type="component" value="Chromosome 5"/>
</dbReference>
<dbReference type="Proteomes" id="UP000007752">
    <property type="component" value="Chromosome 5"/>
</dbReference>
<dbReference type="Proteomes" id="UP000059680">
    <property type="component" value="Chromosome 5"/>
</dbReference>
<dbReference type="GO" id="GO:0005829">
    <property type="term" value="C:cytosol"/>
    <property type="evidence" value="ECO:0000314"/>
    <property type="project" value="UniProtKB"/>
</dbReference>
<dbReference type="GO" id="GO:0005634">
    <property type="term" value="C:nucleus"/>
    <property type="evidence" value="ECO:0000314"/>
    <property type="project" value="UniProtKB"/>
</dbReference>
<dbReference type="GO" id="GO:0046872">
    <property type="term" value="F:metal ion binding"/>
    <property type="evidence" value="ECO:0007669"/>
    <property type="project" value="UniProtKB-KW"/>
</dbReference>
<dbReference type="GO" id="GO:0004722">
    <property type="term" value="F:protein serine/threonine phosphatase activity"/>
    <property type="evidence" value="ECO:0000314"/>
    <property type="project" value="UniProtKB"/>
</dbReference>
<dbReference type="GO" id="GO:0009738">
    <property type="term" value="P:abscisic acid-activated signaling pathway"/>
    <property type="evidence" value="ECO:0007669"/>
    <property type="project" value="UniProtKB-KW"/>
</dbReference>
<dbReference type="GO" id="GO:0009788">
    <property type="term" value="P:negative regulation of abscisic acid-activated signaling pathway"/>
    <property type="evidence" value="ECO:0000315"/>
    <property type="project" value="UniProtKB"/>
</dbReference>
<dbReference type="GO" id="GO:1902531">
    <property type="term" value="P:regulation of intracellular signal transduction"/>
    <property type="evidence" value="ECO:0000318"/>
    <property type="project" value="GO_Central"/>
</dbReference>
<dbReference type="GO" id="GO:0009414">
    <property type="term" value="P:response to water deprivation"/>
    <property type="evidence" value="ECO:0000315"/>
    <property type="project" value="UniProtKB"/>
</dbReference>
<dbReference type="GO" id="GO:0048364">
    <property type="term" value="P:root development"/>
    <property type="evidence" value="ECO:0000315"/>
    <property type="project" value="UniProtKB"/>
</dbReference>
<dbReference type="CDD" id="cd00143">
    <property type="entry name" value="PP2Cc"/>
    <property type="match status" value="1"/>
</dbReference>
<dbReference type="FunFam" id="3.60.40.10:FF:000025">
    <property type="entry name" value="Protein phosphatase 2C 16"/>
    <property type="match status" value="1"/>
</dbReference>
<dbReference type="Gene3D" id="3.60.40.10">
    <property type="entry name" value="PPM-type phosphatase domain"/>
    <property type="match status" value="1"/>
</dbReference>
<dbReference type="InterPro" id="IPR015655">
    <property type="entry name" value="PP2C"/>
</dbReference>
<dbReference type="InterPro" id="IPR000222">
    <property type="entry name" value="PP2C_BS"/>
</dbReference>
<dbReference type="InterPro" id="IPR036457">
    <property type="entry name" value="PPM-type-like_dom_sf"/>
</dbReference>
<dbReference type="InterPro" id="IPR001932">
    <property type="entry name" value="PPM-type_phosphatase-like_dom"/>
</dbReference>
<dbReference type="PANTHER" id="PTHR47992">
    <property type="entry name" value="PROTEIN PHOSPHATASE"/>
    <property type="match status" value="1"/>
</dbReference>
<dbReference type="Pfam" id="PF00481">
    <property type="entry name" value="PP2C"/>
    <property type="match status" value="1"/>
</dbReference>
<dbReference type="SMART" id="SM00331">
    <property type="entry name" value="PP2C_SIG"/>
    <property type="match status" value="1"/>
</dbReference>
<dbReference type="SMART" id="SM00332">
    <property type="entry name" value="PP2Cc"/>
    <property type="match status" value="1"/>
</dbReference>
<dbReference type="SUPFAM" id="SSF81606">
    <property type="entry name" value="PP2C-like"/>
    <property type="match status" value="1"/>
</dbReference>
<dbReference type="PROSITE" id="PS01032">
    <property type="entry name" value="PPM_1"/>
    <property type="match status" value="1"/>
</dbReference>
<dbReference type="PROSITE" id="PS51746">
    <property type="entry name" value="PPM_2"/>
    <property type="match status" value="1"/>
</dbReference>